<accession>B2GCV0</accession>
<name>KHSE_LIMF3</name>
<keyword id="KW-0028">Amino-acid biosynthesis</keyword>
<keyword id="KW-0067">ATP-binding</keyword>
<keyword id="KW-0963">Cytoplasm</keyword>
<keyword id="KW-0418">Kinase</keyword>
<keyword id="KW-0547">Nucleotide-binding</keyword>
<keyword id="KW-1185">Reference proteome</keyword>
<keyword id="KW-0791">Threonine biosynthesis</keyword>
<keyword id="KW-0808">Transferase</keyword>
<dbReference type="EC" id="2.7.1.39" evidence="1"/>
<dbReference type="EMBL" id="AP008937">
    <property type="protein sequence ID" value="BAG27482.1"/>
    <property type="molecule type" value="Genomic_DNA"/>
</dbReference>
<dbReference type="RefSeq" id="WP_003683341.1">
    <property type="nucleotide sequence ID" value="NC_010610.1"/>
</dbReference>
<dbReference type="SMR" id="B2GCV0"/>
<dbReference type="GeneID" id="83714398"/>
<dbReference type="KEGG" id="lfe:LAF_1146"/>
<dbReference type="eggNOG" id="COG0083">
    <property type="taxonomic scope" value="Bacteria"/>
</dbReference>
<dbReference type="HOGENOM" id="CLU_041243_0_0_9"/>
<dbReference type="UniPathway" id="UPA00050">
    <property type="reaction ID" value="UER00064"/>
</dbReference>
<dbReference type="Proteomes" id="UP000001697">
    <property type="component" value="Chromosome"/>
</dbReference>
<dbReference type="GO" id="GO:0005737">
    <property type="term" value="C:cytoplasm"/>
    <property type="evidence" value="ECO:0007669"/>
    <property type="project" value="UniProtKB-SubCell"/>
</dbReference>
<dbReference type="GO" id="GO:0005524">
    <property type="term" value="F:ATP binding"/>
    <property type="evidence" value="ECO:0007669"/>
    <property type="project" value="UniProtKB-UniRule"/>
</dbReference>
<dbReference type="GO" id="GO:0004413">
    <property type="term" value="F:homoserine kinase activity"/>
    <property type="evidence" value="ECO:0007669"/>
    <property type="project" value="UniProtKB-UniRule"/>
</dbReference>
<dbReference type="GO" id="GO:0009088">
    <property type="term" value="P:threonine biosynthetic process"/>
    <property type="evidence" value="ECO:0007669"/>
    <property type="project" value="UniProtKB-UniRule"/>
</dbReference>
<dbReference type="Gene3D" id="3.30.230.10">
    <property type="match status" value="1"/>
</dbReference>
<dbReference type="Gene3D" id="3.30.70.890">
    <property type="entry name" value="GHMP kinase, C-terminal domain"/>
    <property type="match status" value="1"/>
</dbReference>
<dbReference type="HAMAP" id="MF_00384">
    <property type="entry name" value="Homoser_kinase"/>
    <property type="match status" value="1"/>
</dbReference>
<dbReference type="InterPro" id="IPR013750">
    <property type="entry name" value="GHMP_kinase_C_dom"/>
</dbReference>
<dbReference type="InterPro" id="IPR036554">
    <property type="entry name" value="GHMP_kinase_C_sf"/>
</dbReference>
<dbReference type="InterPro" id="IPR006204">
    <property type="entry name" value="GHMP_kinase_N_dom"/>
</dbReference>
<dbReference type="InterPro" id="IPR006203">
    <property type="entry name" value="GHMP_knse_ATP-bd_CS"/>
</dbReference>
<dbReference type="InterPro" id="IPR000870">
    <property type="entry name" value="Homoserine_kinase"/>
</dbReference>
<dbReference type="InterPro" id="IPR020568">
    <property type="entry name" value="Ribosomal_Su5_D2-typ_SF"/>
</dbReference>
<dbReference type="InterPro" id="IPR014721">
    <property type="entry name" value="Ribsml_uS5_D2-typ_fold_subgr"/>
</dbReference>
<dbReference type="NCBIfam" id="TIGR00191">
    <property type="entry name" value="thrB"/>
    <property type="match status" value="1"/>
</dbReference>
<dbReference type="PANTHER" id="PTHR20861:SF1">
    <property type="entry name" value="HOMOSERINE KINASE"/>
    <property type="match status" value="1"/>
</dbReference>
<dbReference type="PANTHER" id="PTHR20861">
    <property type="entry name" value="HOMOSERINE/4-DIPHOSPHOCYTIDYL-2-C-METHYL-D-ERYTHRITOL KINASE"/>
    <property type="match status" value="1"/>
</dbReference>
<dbReference type="Pfam" id="PF08544">
    <property type="entry name" value="GHMP_kinases_C"/>
    <property type="match status" value="1"/>
</dbReference>
<dbReference type="Pfam" id="PF00288">
    <property type="entry name" value="GHMP_kinases_N"/>
    <property type="match status" value="1"/>
</dbReference>
<dbReference type="PIRSF" id="PIRSF000676">
    <property type="entry name" value="Homoser_kin"/>
    <property type="match status" value="1"/>
</dbReference>
<dbReference type="PRINTS" id="PR00958">
    <property type="entry name" value="HOMSERKINASE"/>
</dbReference>
<dbReference type="SUPFAM" id="SSF55060">
    <property type="entry name" value="GHMP Kinase, C-terminal domain"/>
    <property type="match status" value="1"/>
</dbReference>
<dbReference type="SUPFAM" id="SSF54211">
    <property type="entry name" value="Ribosomal protein S5 domain 2-like"/>
    <property type="match status" value="1"/>
</dbReference>
<dbReference type="PROSITE" id="PS00627">
    <property type="entry name" value="GHMP_KINASES_ATP"/>
    <property type="match status" value="1"/>
</dbReference>
<organism>
    <name type="scientific">Limosilactobacillus fermentum (strain NBRC 3956 / LMG 18251)</name>
    <name type="common">Lactobacillus fermentum</name>
    <dbReference type="NCBI Taxonomy" id="334390"/>
    <lineage>
        <taxon>Bacteria</taxon>
        <taxon>Bacillati</taxon>
        <taxon>Bacillota</taxon>
        <taxon>Bacilli</taxon>
        <taxon>Lactobacillales</taxon>
        <taxon>Lactobacillaceae</taxon>
        <taxon>Limosilactobacillus</taxon>
    </lineage>
</organism>
<reference key="1">
    <citation type="journal article" date="2008" name="DNA Res.">
        <title>Comparative genome analysis of Lactobacillus reuteri and Lactobacillus fermentum reveal a genomic island for reuterin and cobalamin production.</title>
        <authorList>
            <person name="Morita H."/>
            <person name="Toh H."/>
            <person name="Fukuda S."/>
            <person name="Horikawa H."/>
            <person name="Oshima K."/>
            <person name="Suzuki T."/>
            <person name="Murakami M."/>
            <person name="Hisamatsu S."/>
            <person name="Kato Y."/>
            <person name="Takizawa T."/>
            <person name="Fukuoka H."/>
            <person name="Yoshimura T."/>
            <person name="Itoh K."/>
            <person name="O'Sullivan D.J."/>
            <person name="McKay L.L."/>
            <person name="Ohno H."/>
            <person name="Kikuchi J."/>
            <person name="Masaoka T."/>
            <person name="Hattori M."/>
        </authorList>
    </citation>
    <scope>NUCLEOTIDE SEQUENCE [LARGE SCALE GENOMIC DNA]</scope>
    <source>
        <strain>NBRC 3956 / LMG 18251</strain>
    </source>
</reference>
<gene>
    <name evidence="1" type="primary">thrB</name>
    <name type="ordered locus">LAF_1146</name>
</gene>
<proteinExistence type="inferred from homology"/>
<protein>
    <recommendedName>
        <fullName evidence="1">Homoserine kinase</fullName>
        <shortName evidence="1">HK</shortName>
        <shortName evidence="1">HSK</shortName>
        <ecNumber evidence="1">2.7.1.39</ecNumber>
    </recommendedName>
</protein>
<sequence>MQIIVPASSANLGPGFDSIGVALSLLLTVDVLGPATSWQVDHQLADLPHDESNLIVQTARQLVPDLTPHHLAVQSDIPVAHGLGSSSSAIVAGIELANQLGALHLSNEQKVAFACQLEGHPDNVAPTILGGLVIGTEVNGGFAAVKAPLPPYLFAAYIPAYNVKTKEARAALPTTLPFKEAVAASATANTLVAALFTGDYQLVGQLIEQDRFHEQARAHLVPELTQLRELGHRCGALATYLSGAGPTVMTLLKEADFPAFQAAITQAGLPGRLVPLTPHPTGVTVS</sequence>
<feature type="chain" id="PRO_1000122428" description="Homoserine kinase">
    <location>
        <begin position="1"/>
        <end position="286"/>
    </location>
</feature>
<feature type="binding site" evidence="1">
    <location>
        <begin position="78"/>
        <end position="88"/>
    </location>
    <ligand>
        <name>ATP</name>
        <dbReference type="ChEBI" id="CHEBI:30616"/>
    </ligand>
</feature>
<evidence type="ECO:0000255" key="1">
    <source>
        <dbReference type="HAMAP-Rule" id="MF_00384"/>
    </source>
</evidence>
<comment type="function">
    <text evidence="1">Catalyzes the ATP-dependent phosphorylation of L-homoserine to L-homoserine phosphate.</text>
</comment>
<comment type="catalytic activity">
    <reaction evidence="1">
        <text>L-homoserine + ATP = O-phospho-L-homoserine + ADP + H(+)</text>
        <dbReference type="Rhea" id="RHEA:13985"/>
        <dbReference type="ChEBI" id="CHEBI:15378"/>
        <dbReference type="ChEBI" id="CHEBI:30616"/>
        <dbReference type="ChEBI" id="CHEBI:57476"/>
        <dbReference type="ChEBI" id="CHEBI:57590"/>
        <dbReference type="ChEBI" id="CHEBI:456216"/>
        <dbReference type="EC" id="2.7.1.39"/>
    </reaction>
</comment>
<comment type="pathway">
    <text evidence="1">Amino-acid biosynthesis; L-threonine biosynthesis; L-threonine from L-aspartate: step 4/5.</text>
</comment>
<comment type="subcellular location">
    <subcellularLocation>
        <location evidence="1">Cytoplasm</location>
    </subcellularLocation>
</comment>
<comment type="similarity">
    <text evidence="1">Belongs to the GHMP kinase family. Homoserine kinase subfamily.</text>
</comment>